<organism>
    <name type="scientific">Thioalkalivibrio sulfidiphilus (strain HL-EbGR7)</name>
    <dbReference type="NCBI Taxonomy" id="396588"/>
    <lineage>
        <taxon>Bacteria</taxon>
        <taxon>Pseudomonadati</taxon>
        <taxon>Pseudomonadota</taxon>
        <taxon>Gammaproteobacteria</taxon>
        <taxon>Chromatiales</taxon>
        <taxon>Ectothiorhodospiraceae</taxon>
        <taxon>Thioalkalivibrio</taxon>
    </lineage>
</organism>
<dbReference type="EC" id="2.8.1.6" evidence="1"/>
<dbReference type="EMBL" id="CP001339">
    <property type="protein sequence ID" value="ACL71234.1"/>
    <property type="molecule type" value="Genomic_DNA"/>
</dbReference>
<dbReference type="SMR" id="B8GTH4"/>
<dbReference type="STRING" id="396588.Tgr7_0131"/>
<dbReference type="KEGG" id="tgr:Tgr7_0131"/>
<dbReference type="eggNOG" id="COG0502">
    <property type="taxonomic scope" value="Bacteria"/>
</dbReference>
<dbReference type="HOGENOM" id="CLU_033172_1_2_6"/>
<dbReference type="UniPathway" id="UPA00078">
    <property type="reaction ID" value="UER00162"/>
</dbReference>
<dbReference type="Proteomes" id="UP000002383">
    <property type="component" value="Chromosome"/>
</dbReference>
<dbReference type="GO" id="GO:0051537">
    <property type="term" value="F:2 iron, 2 sulfur cluster binding"/>
    <property type="evidence" value="ECO:0007669"/>
    <property type="project" value="UniProtKB-KW"/>
</dbReference>
<dbReference type="GO" id="GO:0051539">
    <property type="term" value="F:4 iron, 4 sulfur cluster binding"/>
    <property type="evidence" value="ECO:0007669"/>
    <property type="project" value="UniProtKB-KW"/>
</dbReference>
<dbReference type="GO" id="GO:0004076">
    <property type="term" value="F:biotin synthase activity"/>
    <property type="evidence" value="ECO:0007669"/>
    <property type="project" value="UniProtKB-UniRule"/>
</dbReference>
<dbReference type="GO" id="GO:0005506">
    <property type="term" value="F:iron ion binding"/>
    <property type="evidence" value="ECO:0007669"/>
    <property type="project" value="UniProtKB-UniRule"/>
</dbReference>
<dbReference type="GO" id="GO:0009102">
    <property type="term" value="P:biotin biosynthetic process"/>
    <property type="evidence" value="ECO:0007669"/>
    <property type="project" value="UniProtKB-UniRule"/>
</dbReference>
<dbReference type="CDD" id="cd01335">
    <property type="entry name" value="Radical_SAM"/>
    <property type="match status" value="1"/>
</dbReference>
<dbReference type="FunFam" id="3.20.20.70:FF:000011">
    <property type="entry name" value="Biotin synthase"/>
    <property type="match status" value="1"/>
</dbReference>
<dbReference type="Gene3D" id="3.20.20.70">
    <property type="entry name" value="Aldolase class I"/>
    <property type="match status" value="1"/>
</dbReference>
<dbReference type="HAMAP" id="MF_01694">
    <property type="entry name" value="BioB"/>
    <property type="match status" value="1"/>
</dbReference>
<dbReference type="InterPro" id="IPR013785">
    <property type="entry name" value="Aldolase_TIM"/>
</dbReference>
<dbReference type="InterPro" id="IPR010722">
    <property type="entry name" value="BATS_dom"/>
</dbReference>
<dbReference type="InterPro" id="IPR002684">
    <property type="entry name" value="Biotin_synth/BioAB"/>
</dbReference>
<dbReference type="InterPro" id="IPR024177">
    <property type="entry name" value="Biotin_synthase"/>
</dbReference>
<dbReference type="InterPro" id="IPR006638">
    <property type="entry name" value="Elp3/MiaA/NifB-like_rSAM"/>
</dbReference>
<dbReference type="InterPro" id="IPR007197">
    <property type="entry name" value="rSAM"/>
</dbReference>
<dbReference type="NCBIfam" id="TIGR00433">
    <property type="entry name" value="bioB"/>
    <property type="match status" value="1"/>
</dbReference>
<dbReference type="PANTHER" id="PTHR22976">
    <property type="entry name" value="BIOTIN SYNTHASE"/>
    <property type="match status" value="1"/>
</dbReference>
<dbReference type="PANTHER" id="PTHR22976:SF2">
    <property type="entry name" value="BIOTIN SYNTHASE, MITOCHONDRIAL"/>
    <property type="match status" value="1"/>
</dbReference>
<dbReference type="Pfam" id="PF06968">
    <property type="entry name" value="BATS"/>
    <property type="match status" value="1"/>
</dbReference>
<dbReference type="Pfam" id="PF04055">
    <property type="entry name" value="Radical_SAM"/>
    <property type="match status" value="1"/>
</dbReference>
<dbReference type="PIRSF" id="PIRSF001619">
    <property type="entry name" value="Biotin_synth"/>
    <property type="match status" value="1"/>
</dbReference>
<dbReference type="SFLD" id="SFLDF00272">
    <property type="entry name" value="biotin_synthase"/>
    <property type="match status" value="1"/>
</dbReference>
<dbReference type="SFLD" id="SFLDS00029">
    <property type="entry name" value="Radical_SAM"/>
    <property type="match status" value="1"/>
</dbReference>
<dbReference type="SMART" id="SM00876">
    <property type="entry name" value="BATS"/>
    <property type="match status" value="1"/>
</dbReference>
<dbReference type="SMART" id="SM00729">
    <property type="entry name" value="Elp3"/>
    <property type="match status" value="1"/>
</dbReference>
<dbReference type="SUPFAM" id="SSF102114">
    <property type="entry name" value="Radical SAM enzymes"/>
    <property type="match status" value="1"/>
</dbReference>
<dbReference type="PROSITE" id="PS51918">
    <property type="entry name" value="RADICAL_SAM"/>
    <property type="match status" value="1"/>
</dbReference>
<proteinExistence type="inferred from homology"/>
<protein>
    <recommendedName>
        <fullName evidence="1">Biotin synthase</fullName>
        <ecNumber evidence="1">2.8.1.6</ecNumber>
    </recommendedName>
</protein>
<comment type="function">
    <text evidence="1">Catalyzes the conversion of dethiobiotin (DTB) to biotin by the insertion of a sulfur atom into dethiobiotin via a radical-based mechanism.</text>
</comment>
<comment type="catalytic activity">
    <reaction evidence="1">
        <text>(4R,5S)-dethiobiotin + (sulfur carrier)-SH + 2 reduced [2Fe-2S]-[ferredoxin] + 2 S-adenosyl-L-methionine = (sulfur carrier)-H + biotin + 2 5'-deoxyadenosine + 2 L-methionine + 2 oxidized [2Fe-2S]-[ferredoxin]</text>
        <dbReference type="Rhea" id="RHEA:22060"/>
        <dbReference type="Rhea" id="RHEA-COMP:10000"/>
        <dbReference type="Rhea" id="RHEA-COMP:10001"/>
        <dbReference type="Rhea" id="RHEA-COMP:14737"/>
        <dbReference type="Rhea" id="RHEA-COMP:14739"/>
        <dbReference type="ChEBI" id="CHEBI:17319"/>
        <dbReference type="ChEBI" id="CHEBI:29917"/>
        <dbReference type="ChEBI" id="CHEBI:33737"/>
        <dbReference type="ChEBI" id="CHEBI:33738"/>
        <dbReference type="ChEBI" id="CHEBI:57586"/>
        <dbReference type="ChEBI" id="CHEBI:57844"/>
        <dbReference type="ChEBI" id="CHEBI:59789"/>
        <dbReference type="ChEBI" id="CHEBI:64428"/>
        <dbReference type="ChEBI" id="CHEBI:149473"/>
        <dbReference type="EC" id="2.8.1.6"/>
    </reaction>
</comment>
<comment type="cofactor">
    <cofactor evidence="1">
        <name>[4Fe-4S] cluster</name>
        <dbReference type="ChEBI" id="CHEBI:49883"/>
    </cofactor>
    <text evidence="1">Binds 1 [4Fe-4S] cluster. The cluster is coordinated with 3 cysteines and an exchangeable S-adenosyl-L-methionine.</text>
</comment>
<comment type="cofactor">
    <cofactor evidence="1">
        <name>[2Fe-2S] cluster</name>
        <dbReference type="ChEBI" id="CHEBI:190135"/>
    </cofactor>
    <text evidence="1">Binds 1 [2Fe-2S] cluster. The cluster is coordinated with 3 cysteines and 1 arginine.</text>
</comment>
<comment type="pathway">
    <text evidence="1">Cofactor biosynthesis; biotin biosynthesis; biotin from 7,8-diaminononanoate: step 2/2.</text>
</comment>
<comment type="subunit">
    <text evidence="1">Homodimer.</text>
</comment>
<comment type="similarity">
    <text evidence="1">Belongs to the radical SAM superfamily. Biotin synthase family.</text>
</comment>
<keyword id="KW-0001">2Fe-2S</keyword>
<keyword id="KW-0004">4Fe-4S</keyword>
<keyword id="KW-0093">Biotin biosynthesis</keyword>
<keyword id="KW-0408">Iron</keyword>
<keyword id="KW-0411">Iron-sulfur</keyword>
<keyword id="KW-0479">Metal-binding</keyword>
<keyword id="KW-1185">Reference proteome</keyword>
<keyword id="KW-0949">S-adenosyl-L-methionine</keyword>
<keyword id="KW-0808">Transferase</keyword>
<gene>
    <name evidence="1" type="primary">bioB</name>
    <name type="ordered locus">Tgr7_0131</name>
</gene>
<name>BIOB_THISH</name>
<evidence type="ECO:0000255" key="1">
    <source>
        <dbReference type="HAMAP-Rule" id="MF_01694"/>
    </source>
</evidence>
<evidence type="ECO:0000255" key="2">
    <source>
        <dbReference type="PROSITE-ProRule" id="PRU01266"/>
    </source>
</evidence>
<sequence>MSPASPMSEIRHDWQVDEILELMGRPFNDLLFAAHTVHRAHFDPNAVQVSTLLSIKTGACPEDCGYCPQSAHHEVELERERLLPLEEVLEAARNARSHGASRFCMGAAWRNPTDRNLERVIEMVEGVKQLGLETCMTLGMLTDAQARRLKDAGLDYYNHNLDTSPEFYGQVITTRTYQDRLETLAHVREAGINVCSGGILGMGESRRDRARLLQQLANLPRHPESVPINNLVQVEGTPLAGTEALDPFEFVRTIATARILMPASYVRLSAGRTEMHDELQALCFFAGANSIFYGDKLLTTPNPGENHDRALFERLGIHPLEHSDEGASCETCGGVDIHAA</sequence>
<feature type="chain" id="PRO_0000381691" description="Biotin synthase">
    <location>
        <begin position="1"/>
        <end position="340"/>
    </location>
</feature>
<feature type="domain" description="Radical SAM core" evidence="2">
    <location>
        <begin position="45"/>
        <end position="272"/>
    </location>
</feature>
<feature type="binding site" evidence="1">
    <location>
        <position position="60"/>
    </location>
    <ligand>
        <name>[4Fe-4S] cluster</name>
        <dbReference type="ChEBI" id="CHEBI:49883"/>
        <note>4Fe-4S-S-AdoMet</note>
    </ligand>
</feature>
<feature type="binding site" evidence="1">
    <location>
        <position position="64"/>
    </location>
    <ligand>
        <name>[4Fe-4S] cluster</name>
        <dbReference type="ChEBI" id="CHEBI:49883"/>
        <note>4Fe-4S-S-AdoMet</note>
    </ligand>
</feature>
<feature type="binding site" evidence="1">
    <location>
        <position position="67"/>
    </location>
    <ligand>
        <name>[4Fe-4S] cluster</name>
        <dbReference type="ChEBI" id="CHEBI:49883"/>
        <note>4Fe-4S-S-AdoMet</note>
    </ligand>
</feature>
<feature type="binding site" evidence="1">
    <location>
        <position position="104"/>
    </location>
    <ligand>
        <name>[2Fe-2S] cluster</name>
        <dbReference type="ChEBI" id="CHEBI:190135"/>
    </ligand>
</feature>
<feature type="binding site" evidence="1">
    <location>
        <position position="135"/>
    </location>
    <ligand>
        <name>[2Fe-2S] cluster</name>
        <dbReference type="ChEBI" id="CHEBI:190135"/>
    </ligand>
</feature>
<feature type="binding site" evidence="1">
    <location>
        <position position="195"/>
    </location>
    <ligand>
        <name>[2Fe-2S] cluster</name>
        <dbReference type="ChEBI" id="CHEBI:190135"/>
    </ligand>
</feature>
<feature type="binding site" evidence="1">
    <location>
        <position position="267"/>
    </location>
    <ligand>
        <name>[2Fe-2S] cluster</name>
        <dbReference type="ChEBI" id="CHEBI:190135"/>
    </ligand>
</feature>
<accession>B8GTH4</accession>
<reference key="1">
    <citation type="journal article" date="2011" name="Stand. Genomic Sci.">
        <title>Complete genome sequence of 'Thioalkalivibrio sulfidophilus' HL-EbGr7.</title>
        <authorList>
            <person name="Muyzer G."/>
            <person name="Sorokin D.Y."/>
            <person name="Mavromatis K."/>
            <person name="Lapidus A."/>
            <person name="Clum A."/>
            <person name="Ivanova N."/>
            <person name="Pati A."/>
            <person name="d'Haeseleer P."/>
            <person name="Woyke T."/>
            <person name="Kyrpides N.C."/>
        </authorList>
    </citation>
    <scope>NUCLEOTIDE SEQUENCE [LARGE SCALE GENOMIC DNA]</scope>
    <source>
        <strain>HL-EbGR7</strain>
    </source>
</reference>